<name>CAPSD_WHV4</name>
<organismHost>
    <name type="scientific">Marmota monax</name>
    <name type="common">Woodchuck</name>
    <dbReference type="NCBI Taxonomy" id="9995"/>
</organismHost>
<accession>P69710</accession>
<accession>P03152</accession>
<gene>
    <name evidence="1" type="primary">C</name>
</gene>
<protein>
    <recommendedName>
        <fullName evidence="1">Capsid protein</fullName>
    </recommendedName>
    <alternativeName>
        <fullName evidence="1">Core antigen</fullName>
    </alternativeName>
    <alternativeName>
        <fullName evidence="1">Core protein</fullName>
    </alternativeName>
    <alternativeName>
        <fullName evidence="1">HBcAg</fullName>
    </alternativeName>
    <alternativeName>
        <fullName evidence="1">p21.5</fullName>
    </alternativeName>
</protein>
<organism>
    <name type="scientific">Woodchuck hepatitis B virus (isolate 7)</name>
    <name type="common">WHV</name>
    <dbReference type="NCBI Taxonomy" id="10432"/>
    <lineage>
        <taxon>Viruses</taxon>
        <taxon>Riboviria</taxon>
        <taxon>Pararnavirae</taxon>
        <taxon>Artverviricota</taxon>
        <taxon>Revtraviricetes</taxon>
        <taxon>Blubervirales</taxon>
        <taxon>Hepadnaviridae</taxon>
        <taxon>Orthohepadnavirus</taxon>
        <taxon>Woodchuck hepatitis virus</taxon>
    </lineage>
</organism>
<reference key="1">
    <citation type="journal article" date="1988" name="Virology">
        <title>Sequence comparison of woodchuck hepatitis virus replicative forms shows conservation of the genome.</title>
        <authorList>
            <person name="Cohen J.I."/>
            <person name="Miller R.H."/>
            <person name="Rosenblum B."/>
            <person name="Denniston K."/>
            <person name="Gerin J.L."/>
            <person name="Purcell R.H."/>
        </authorList>
    </citation>
    <scope>NUCLEOTIDE SEQUENCE [GENOMIC DNA]</scope>
</reference>
<feature type="chain" id="PRO_0000222323" description="Capsid protein">
    <location>
        <begin position="1"/>
        <end position="188"/>
    </location>
</feature>
<feature type="repeat" description="1; half-length">
    <location>
        <begin position="160"/>
        <end position="166"/>
    </location>
</feature>
<feature type="repeat" description="2">
    <location>
        <begin position="167"/>
        <end position="174"/>
    </location>
</feature>
<feature type="repeat" description="3">
    <location>
        <begin position="175"/>
        <end position="182"/>
    </location>
</feature>
<feature type="region of interest" description="Disordered" evidence="2">
    <location>
        <begin position="150"/>
        <end position="188"/>
    </location>
</feature>
<feature type="region of interest" description="3 X 8 AA repeats of S-P-R-R-R-[PR]-S-Q">
    <location>
        <begin position="160"/>
        <end position="182"/>
    </location>
</feature>
<feature type="region of interest" description="RNA binding" evidence="1">
    <location>
        <begin position="182"/>
        <end position="188"/>
    </location>
</feature>
<feature type="short sequence motif" description="Bipartite nuclear localization signal" evidence="1">
    <location>
        <begin position="163"/>
        <end position="180"/>
    </location>
</feature>
<feature type="compositionally biased region" description="Basic residues" evidence="2">
    <location>
        <begin position="150"/>
        <end position="181"/>
    </location>
</feature>
<feature type="modified residue" description="Phosphoserine; by host" evidence="1">
    <location>
        <position position="160"/>
    </location>
</feature>
<feature type="modified residue" description="Phosphoserine; by host" evidence="1">
    <location>
        <position position="167"/>
    </location>
</feature>
<feature type="modified residue" description="Phosphoserine; by host" evidence="1">
    <location>
        <position position="175"/>
    </location>
</feature>
<sequence>MDIDPYKEFGSSYQLLNFLPLDFFPDLNALVDTATALYEEELTGREHCSPHHTAIRQALVCWDELTKLIAWMSSNITSEQVRTIIVNHVNDTWGLKVRQSLWFHLSCLTFGQHTVQEFLVSFGVWIRTPAPYRPPNAPILSTLPEHTVIRRRGGARASRSPRRRTPSPRRRRSQSPRRRRSQSPSANC</sequence>
<dbReference type="EMBL" id="M18752">
    <property type="protein sequence ID" value="AAA46769.1"/>
    <property type="molecule type" value="Genomic_DNA"/>
</dbReference>
<dbReference type="PIR" id="C32397">
    <property type="entry name" value="NKVLC"/>
</dbReference>
<dbReference type="RefSeq" id="NP_671816.1">
    <property type="nucleotide sequence ID" value="NC_004107.1"/>
</dbReference>
<dbReference type="SMR" id="P69710"/>
<dbReference type="KEGG" id="vg:2546420"/>
<dbReference type="Proteomes" id="UP000008598">
    <property type="component" value="Segment"/>
</dbReference>
<dbReference type="GO" id="GO:0043657">
    <property type="term" value="C:host cell"/>
    <property type="evidence" value="ECO:0007669"/>
    <property type="project" value="GOC"/>
</dbReference>
<dbReference type="GO" id="GO:0030430">
    <property type="term" value="C:host cell cytoplasm"/>
    <property type="evidence" value="ECO:0007669"/>
    <property type="project" value="UniProtKB-SubCell"/>
</dbReference>
<dbReference type="GO" id="GO:0039619">
    <property type="term" value="C:T=4 icosahedral viral capsid"/>
    <property type="evidence" value="ECO:0007669"/>
    <property type="project" value="UniProtKB-UniRule"/>
</dbReference>
<dbReference type="GO" id="GO:0003677">
    <property type="term" value="F:DNA binding"/>
    <property type="evidence" value="ECO:0007669"/>
    <property type="project" value="UniProtKB-UniRule"/>
</dbReference>
<dbReference type="GO" id="GO:0003723">
    <property type="term" value="F:RNA binding"/>
    <property type="evidence" value="ECO:0007669"/>
    <property type="project" value="UniProtKB-UniRule"/>
</dbReference>
<dbReference type="GO" id="GO:0005198">
    <property type="term" value="F:structural molecule activity"/>
    <property type="evidence" value="ECO:0007669"/>
    <property type="project" value="UniProtKB-UniRule"/>
</dbReference>
<dbReference type="GO" id="GO:0075521">
    <property type="term" value="P:microtubule-dependent intracellular transport of viral material towards nucleus"/>
    <property type="evidence" value="ECO:0007669"/>
    <property type="project" value="UniProtKB-UniRule"/>
</dbReference>
<dbReference type="GO" id="GO:0046718">
    <property type="term" value="P:symbiont entry into host cell"/>
    <property type="evidence" value="ECO:0007669"/>
    <property type="project" value="UniProtKB-UniRule"/>
</dbReference>
<dbReference type="GO" id="GO:0075732">
    <property type="term" value="P:viral penetration into host nucleus"/>
    <property type="evidence" value="ECO:0007669"/>
    <property type="project" value="UniProtKB-UniRule"/>
</dbReference>
<dbReference type="Gene3D" id="1.10.4090.10">
    <property type="entry name" value="Viral capsid, core domain supefamily, Hepatitis B virus"/>
    <property type="match status" value="1"/>
</dbReference>
<dbReference type="HAMAP" id="MF_04076">
    <property type="entry name" value="HBV_HBEAG"/>
    <property type="match status" value="1"/>
</dbReference>
<dbReference type="InterPro" id="IPR002006">
    <property type="entry name" value="Hepatitis_core"/>
</dbReference>
<dbReference type="InterPro" id="IPR036459">
    <property type="entry name" value="Viral_capsid_core_dom_sf_HBV"/>
</dbReference>
<dbReference type="Pfam" id="PF00906">
    <property type="entry name" value="Hepatitis_core"/>
    <property type="match status" value="3"/>
</dbReference>
<dbReference type="SUPFAM" id="SSF47852">
    <property type="entry name" value="Hepatitis B viral capsid (hbcag)"/>
    <property type="match status" value="1"/>
</dbReference>
<keyword id="KW-0024">Alternative initiation</keyword>
<keyword id="KW-0167">Capsid protein</keyword>
<keyword id="KW-1176">Cytoplasmic inwards viral transport</keyword>
<keyword id="KW-0238">DNA-binding</keyword>
<keyword id="KW-1035">Host cytoplasm</keyword>
<keyword id="KW-0945">Host-virus interaction</keyword>
<keyword id="KW-1177">Microtubular inwards viral transport</keyword>
<keyword id="KW-0597">Phosphoprotein</keyword>
<keyword id="KW-0677">Repeat</keyword>
<keyword id="KW-0694">RNA-binding</keyword>
<keyword id="KW-1144">T=4 icosahedral capsid protein</keyword>
<keyword id="KW-1163">Viral penetration into host nucleus</keyword>
<keyword id="KW-0946">Virion</keyword>
<keyword id="KW-1160">Virus entry into host cell</keyword>
<evidence type="ECO:0000255" key="1">
    <source>
        <dbReference type="HAMAP-Rule" id="MF_04076"/>
    </source>
</evidence>
<evidence type="ECO:0000256" key="2">
    <source>
        <dbReference type="SAM" id="MobiDB-lite"/>
    </source>
</evidence>
<proteinExistence type="inferred from homology"/>
<comment type="function">
    <text evidence="1">Self assembles to form an icosahedral capsid. Most capsids appear to be large particles with an icosahedral symmetry of T=4 and consist of 240 copies of capsid protein, though a fraction forms smaller T=3 particles consisting of 180 capsid proteins. Entering capsids are transported along microtubules to the nucleus. Phosphorylation of the capsid is thought to induce exposure of nuclear localization signal in the C-terminal portion of the capsid protein that allows binding to the nuclear pore complex via the importin (karyopherin-) alpha and beta. Capsids are imported in intact form through the nuclear pore into the nuclear basket, where it probably binds NUP153. Only capsids that contain the mature viral genome can release the viral DNA and capsid protein into the nucleoplasm. Immature capsids get stuck in the basket. Capsids encapsulate the pre-genomic RNA and the P protein. Pre-genomic RNA is reverse-transcribed into DNA while the capsid is still in the cytoplasm. The capsid can then either be directed to the nucleus, providing more genomes for transcription, or bud through the endoplasmic reticulum to provide new virions.</text>
</comment>
<comment type="subunit">
    <text evidence="1">Homodimerizes, then multimerizes. Interacts with cytosol exposed regions of viral L glycoprotein present in the reticulum-to-Golgi compartment. Interacts with human FLNB. Phosphorylated form interacts with host importin alpha; this interaction depends on the exposure of the NLS, which itself depends upon genome maturation and/or phosphorylation of the capsid protein. Interacts with host NUP153.</text>
</comment>
<comment type="subcellular location">
    <subcellularLocation>
        <location evidence="1">Virion</location>
    </subcellularLocation>
    <subcellularLocation>
        <location evidence="1">Host cytoplasm</location>
    </subcellularLocation>
</comment>
<comment type="alternative products">
    <event type="alternative initiation"/>
    <isoform>
        <id>P69710-1</id>
        <name>Capsid protein</name>
        <sequence type="displayed"/>
    </isoform>
    <isoform>
        <id>P0C6J5-1</id>
        <name>External core antigen</name>
        <sequence type="external"/>
    </isoform>
</comment>
<comment type="PTM">
    <text evidence="1">Phosphorylated by host SRPK1, SRPK2, and maybe protein kinase C or GAPDH. Phosphorylation is critical for pregenomic RNA packaging. Protein kinase C phosphorylation is stimulated by HBx protein and may play a role in transport of the viral genome to the nucleus at the late step during the viral replication cycle.</text>
</comment>
<comment type="similarity">
    <text evidence="1">Belongs to the orthohepadnavirus core antigen family.</text>
</comment>